<proteinExistence type="evidence at protein level"/>
<sequence length="684" mass="77908">MSKIPGSNLEFVREEDFVEYYIFPKIPDNVQDEGALRKLMLQIRNEISAIVREKSLERSYLWHKDEFQLQVRLGGAEERLLNEETNPEEEAELGDLPPHFHGVTHYGDNISDEWFVVYLLTEITRARGDCIARVSDSDGEFLLIEAADALPDWASPETCEQRVYLVGGHLQLLQNSAASSQDKPLTMAMAVQRIRMNPTLYRCSQEIQSCIDARLKEYQIAQPHFSIHRQVLELPHSAAQLLKQKPRLLSSAVRAFCERDSLDIKALRTMRYFPPEATRVRTNVRFTRCLYAMLSHQQYLPEKRLGWHLTDPVSEPERYKEQLLGLKLASGLEILATQAKRVEGQQLEDLPAWRSYLRSLLSKGYFRDNIEGSAEYQELLNKAKVYFRGNQERFRTASRAGAEILDLLLHPAEAASEELRDEENNLQPSDSDEWLNISAEDLDSMLQDRYGPKKLYKPNGQMNAEEFTKQLAEFLDRQSNYEGIEHRGLEEPELDSDDDEPPPQANGSTGLTAKVKKNPSMRKACQRNSVIQPEEPDSTHVRNFLDFVIPEDNWDSTSEMSDYADEDDMESNLNALSGGGSVFPLDRQIQSYMEQMDRELAQTSVGKSFHGKKKTAPQADEDDFDDIEDFEPININVNTLRNMMDSYQSQVGGAGPVSNLFSAMGVGMSAVEDKEQKDISESAV</sequence>
<feature type="chain" id="PRO_0000220846" description="Protein ecdysoneless">
    <location>
        <begin position="1"/>
        <end position="684"/>
    </location>
</feature>
<feature type="region of interest" description="Disordered" evidence="1">
    <location>
        <begin position="491"/>
        <end position="528"/>
    </location>
</feature>
<feature type="region of interest" description="Disordered" evidence="1">
    <location>
        <begin position="603"/>
        <end position="624"/>
    </location>
</feature>
<feature type="compositionally biased region" description="Acidic residues" evidence="1">
    <location>
        <begin position="491"/>
        <end position="501"/>
    </location>
</feature>
<feature type="mutagenesis site" description="Temperature-sensitive mutation; disrupts production of the steroid hormone ecdysone, causes developmental and reproductive defects." evidence="2">
    <original>P</original>
    <variation>S</variation>
    <location>
        <position position="656"/>
    </location>
</feature>
<accession>Q9W032</accession>
<name>ECD_DROME</name>
<organism>
    <name type="scientific">Drosophila melanogaster</name>
    <name type="common">Fruit fly</name>
    <dbReference type="NCBI Taxonomy" id="7227"/>
    <lineage>
        <taxon>Eukaryota</taxon>
        <taxon>Metazoa</taxon>
        <taxon>Ecdysozoa</taxon>
        <taxon>Arthropoda</taxon>
        <taxon>Hexapoda</taxon>
        <taxon>Insecta</taxon>
        <taxon>Pterygota</taxon>
        <taxon>Neoptera</taxon>
        <taxon>Endopterygota</taxon>
        <taxon>Diptera</taxon>
        <taxon>Brachycera</taxon>
        <taxon>Muscomorpha</taxon>
        <taxon>Ephydroidea</taxon>
        <taxon>Drosophilidae</taxon>
        <taxon>Drosophila</taxon>
        <taxon>Sophophora</taxon>
    </lineage>
</organism>
<reference key="1">
    <citation type="journal article" date="2000" name="Science">
        <title>The genome sequence of Drosophila melanogaster.</title>
        <authorList>
            <person name="Adams M.D."/>
            <person name="Celniker S.E."/>
            <person name="Holt R.A."/>
            <person name="Evans C.A."/>
            <person name="Gocayne J.D."/>
            <person name="Amanatides P.G."/>
            <person name="Scherer S.E."/>
            <person name="Li P.W."/>
            <person name="Hoskins R.A."/>
            <person name="Galle R.F."/>
            <person name="George R.A."/>
            <person name="Lewis S.E."/>
            <person name="Richards S."/>
            <person name="Ashburner M."/>
            <person name="Henderson S.N."/>
            <person name="Sutton G.G."/>
            <person name="Wortman J.R."/>
            <person name="Yandell M.D."/>
            <person name="Zhang Q."/>
            <person name="Chen L.X."/>
            <person name="Brandon R.C."/>
            <person name="Rogers Y.-H.C."/>
            <person name="Blazej R.G."/>
            <person name="Champe M."/>
            <person name="Pfeiffer B.D."/>
            <person name="Wan K.H."/>
            <person name="Doyle C."/>
            <person name="Baxter E.G."/>
            <person name="Helt G."/>
            <person name="Nelson C.R."/>
            <person name="Miklos G.L.G."/>
            <person name="Abril J.F."/>
            <person name="Agbayani A."/>
            <person name="An H.-J."/>
            <person name="Andrews-Pfannkoch C."/>
            <person name="Baldwin D."/>
            <person name="Ballew R.M."/>
            <person name="Basu A."/>
            <person name="Baxendale J."/>
            <person name="Bayraktaroglu L."/>
            <person name="Beasley E.M."/>
            <person name="Beeson K.Y."/>
            <person name="Benos P.V."/>
            <person name="Berman B.P."/>
            <person name="Bhandari D."/>
            <person name="Bolshakov S."/>
            <person name="Borkova D."/>
            <person name="Botchan M.R."/>
            <person name="Bouck J."/>
            <person name="Brokstein P."/>
            <person name="Brottier P."/>
            <person name="Burtis K.C."/>
            <person name="Busam D.A."/>
            <person name="Butler H."/>
            <person name="Cadieu E."/>
            <person name="Center A."/>
            <person name="Chandra I."/>
            <person name="Cherry J.M."/>
            <person name="Cawley S."/>
            <person name="Dahlke C."/>
            <person name="Davenport L.B."/>
            <person name="Davies P."/>
            <person name="de Pablos B."/>
            <person name="Delcher A."/>
            <person name="Deng Z."/>
            <person name="Mays A.D."/>
            <person name="Dew I."/>
            <person name="Dietz S.M."/>
            <person name="Dodson K."/>
            <person name="Doup L.E."/>
            <person name="Downes M."/>
            <person name="Dugan-Rocha S."/>
            <person name="Dunkov B.C."/>
            <person name="Dunn P."/>
            <person name="Durbin K.J."/>
            <person name="Evangelista C.C."/>
            <person name="Ferraz C."/>
            <person name="Ferriera S."/>
            <person name="Fleischmann W."/>
            <person name="Fosler C."/>
            <person name="Gabrielian A.E."/>
            <person name="Garg N.S."/>
            <person name="Gelbart W.M."/>
            <person name="Glasser K."/>
            <person name="Glodek A."/>
            <person name="Gong F."/>
            <person name="Gorrell J.H."/>
            <person name="Gu Z."/>
            <person name="Guan P."/>
            <person name="Harris M."/>
            <person name="Harris N.L."/>
            <person name="Harvey D.A."/>
            <person name="Heiman T.J."/>
            <person name="Hernandez J.R."/>
            <person name="Houck J."/>
            <person name="Hostin D."/>
            <person name="Houston K.A."/>
            <person name="Howland T.J."/>
            <person name="Wei M.-H."/>
            <person name="Ibegwam C."/>
            <person name="Jalali M."/>
            <person name="Kalush F."/>
            <person name="Karpen G.H."/>
            <person name="Ke Z."/>
            <person name="Kennison J.A."/>
            <person name="Ketchum K.A."/>
            <person name="Kimmel B.E."/>
            <person name="Kodira C.D."/>
            <person name="Kraft C.L."/>
            <person name="Kravitz S."/>
            <person name="Kulp D."/>
            <person name="Lai Z."/>
            <person name="Lasko P."/>
            <person name="Lei Y."/>
            <person name="Levitsky A.A."/>
            <person name="Li J.H."/>
            <person name="Li Z."/>
            <person name="Liang Y."/>
            <person name="Lin X."/>
            <person name="Liu X."/>
            <person name="Mattei B."/>
            <person name="McIntosh T.C."/>
            <person name="McLeod M.P."/>
            <person name="McPherson D."/>
            <person name="Merkulov G."/>
            <person name="Milshina N.V."/>
            <person name="Mobarry C."/>
            <person name="Morris J."/>
            <person name="Moshrefi A."/>
            <person name="Mount S.M."/>
            <person name="Moy M."/>
            <person name="Murphy B."/>
            <person name="Murphy L."/>
            <person name="Muzny D.M."/>
            <person name="Nelson D.L."/>
            <person name="Nelson D.R."/>
            <person name="Nelson K.A."/>
            <person name="Nixon K."/>
            <person name="Nusskern D.R."/>
            <person name="Pacleb J.M."/>
            <person name="Palazzolo M."/>
            <person name="Pittman G.S."/>
            <person name="Pan S."/>
            <person name="Pollard J."/>
            <person name="Puri V."/>
            <person name="Reese M.G."/>
            <person name="Reinert K."/>
            <person name="Remington K."/>
            <person name="Saunders R.D.C."/>
            <person name="Scheeler F."/>
            <person name="Shen H."/>
            <person name="Shue B.C."/>
            <person name="Siden-Kiamos I."/>
            <person name="Simpson M."/>
            <person name="Skupski M.P."/>
            <person name="Smith T.J."/>
            <person name="Spier E."/>
            <person name="Spradling A.C."/>
            <person name="Stapleton M."/>
            <person name="Strong R."/>
            <person name="Sun E."/>
            <person name="Svirskas R."/>
            <person name="Tector C."/>
            <person name="Turner R."/>
            <person name="Venter E."/>
            <person name="Wang A.H."/>
            <person name="Wang X."/>
            <person name="Wang Z.-Y."/>
            <person name="Wassarman D.A."/>
            <person name="Weinstock G.M."/>
            <person name="Weissenbach J."/>
            <person name="Williams S.M."/>
            <person name="Woodage T."/>
            <person name="Worley K.C."/>
            <person name="Wu D."/>
            <person name="Yang S."/>
            <person name="Yao Q.A."/>
            <person name="Ye J."/>
            <person name="Yeh R.-F."/>
            <person name="Zaveri J.S."/>
            <person name="Zhan M."/>
            <person name="Zhang G."/>
            <person name="Zhao Q."/>
            <person name="Zheng L."/>
            <person name="Zheng X.H."/>
            <person name="Zhong F.N."/>
            <person name="Zhong W."/>
            <person name="Zhou X."/>
            <person name="Zhu S.C."/>
            <person name="Zhu X."/>
            <person name="Smith H.O."/>
            <person name="Gibbs R.A."/>
            <person name="Myers E.W."/>
            <person name="Rubin G.M."/>
            <person name="Venter J.C."/>
        </authorList>
    </citation>
    <scope>NUCLEOTIDE SEQUENCE [LARGE SCALE GENOMIC DNA]</scope>
    <source>
        <strain>Berkeley</strain>
    </source>
</reference>
<reference key="2">
    <citation type="journal article" date="2002" name="Genome Biol.">
        <title>Annotation of the Drosophila melanogaster euchromatic genome: a systematic review.</title>
        <authorList>
            <person name="Misra S."/>
            <person name="Crosby M.A."/>
            <person name="Mungall C.J."/>
            <person name="Matthews B.B."/>
            <person name="Campbell K.S."/>
            <person name="Hradecky P."/>
            <person name="Huang Y."/>
            <person name="Kaminker J.S."/>
            <person name="Millburn G.H."/>
            <person name="Prochnik S.E."/>
            <person name="Smith C.D."/>
            <person name="Tupy J.L."/>
            <person name="Whitfield E.J."/>
            <person name="Bayraktaroglu L."/>
            <person name="Berman B.P."/>
            <person name="Bettencourt B.R."/>
            <person name="Celniker S.E."/>
            <person name="de Grey A.D.N.J."/>
            <person name="Drysdale R.A."/>
            <person name="Harris N.L."/>
            <person name="Richter J."/>
            <person name="Russo S."/>
            <person name="Schroeder A.J."/>
            <person name="Shu S.Q."/>
            <person name="Stapleton M."/>
            <person name="Yamada C."/>
            <person name="Ashburner M."/>
            <person name="Gelbart W.M."/>
            <person name="Rubin G.M."/>
            <person name="Lewis S.E."/>
        </authorList>
    </citation>
    <scope>GENOME REANNOTATION</scope>
    <source>
        <strain>Berkeley</strain>
    </source>
</reference>
<reference key="3">
    <citation type="journal article" date="2002" name="Genome Biol.">
        <title>A Drosophila full-length cDNA resource.</title>
        <authorList>
            <person name="Stapleton M."/>
            <person name="Carlson J.W."/>
            <person name="Brokstein P."/>
            <person name="Yu C."/>
            <person name="Champe M."/>
            <person name="George R.A."/>
            <person name="Guarin H."/>
            <person name="Kronmiller B."/>
            <person name="Pacleb J.M."/>
            <person name="Park S."/>
            <person name="Wan K.H."/>
            <person name="Rubin G.M."/>
            <person name="Celniker S.E."/>
        </authorList>
    </citation>
    <scope>NUCLEOTIDE SEQUENCE [LARGE SCALE MRNA]</scope>
    <source>
        <strain>Berkeley</strain>
        <tissue>Head</tissue>
    </source>
</reference>
<reference key="4">
    <citation type="journal article" date="2004" name="Development">
        <title>Cell-autonomous roles of the ecdysoneless gene in Drosophila development and oogenesis.</title>
        <authorList>
            <person name="Gaziova I."/>
            <person name="Bonnette P.C."/>
            <person name="Henrich V.C."/>
            <person name="Jindra M."/>
        </authorList>
    </citation>
    <scope>FUNCTION</scope>
    <scope>SUBCELLULAR LOCATION</scope>
    <scope>TISSUE SPECIFICITY</scope>
    <scope>DEVELOPMENTAL STAGE</scope>
    <scope>MUTAGENESIS OF PRO-656</scope>
</reference>
<evidence type="ECO:0000256" key="1">
    <source>
        <dbReference type="SAM" id="MobiDB-lite"/>
    </source>
</evidence>
<evidence type="ECO:0000269" key="2">
    <source>
    </source>
</evidence>
<evidence type="ECO:0000305" key="3"/>
<evidence type="ECO:0000305" key="4">
    <source>
    </source>
</evidence>
<evidence type="ECO:0000312" key="5">
    <source>
        <dbReference type="FlyBase" id="FBgn0000543"/>
    </source>
</evidence>
<protein>
    <recommendedName>
        <fullName evidence="4">Protein ecdysoneless</fullName>
    </recommendedName>
</protein>
<comment type="function">
    <text evidence="2">Required in both the follicle cells and the germline for oocyte development.</text>
</comment>
<comment type="subcellular location">
    <subcellularLocation>
        <location evidence="2">Cytoplasm</location>
    </subcellularLocation>
</comment>
<comment type="tissue specificity">
    <text evidence="2">Expressed in the ecdysone-producing larval ring gland, nervous system, imaginal disks and gonads.</text>
</comment>
<comment type="developmental stage">
    <text evidence="2">Expressed both maternally and zygotically throughout development.</text>
</comment>
<comment type="similarity">
    <text evidence="3">Belongs to the ECD family.</text>
</comment>
<dbReference type="EMBL" id="AE014296">
    <property type="protein sequence ID" value="AAF47628.1"/>
    <property type="molecule type" value="Genomic_DNA"/>
</dbReference>
<dbReference type="EMBL" id="AY051483">
    <property type="protein sequence ID" value="AAK92907.1"/>
    <property type="molecule type" value="mRNA"/>
</dbReference>
<dbReference type="RefSeq" id="NP_647707.1">
    <property type="nucleotide sequence ID" value="NM_139450.3"/>
</dbReference>
<dbReference type="BioGRID" id="63806">
    <property type="interactions" value="21"/>
</dbReference>
<dbReference type="FunCoup" id="Q9W032">
    <property type="interactions" value="2719"/>
</dbReference>
<dbReference type="IntAct" id="Q9W032">
    <property type="interactions" value="17"/>
</dbReference>
<dbReference type="STRING" id="7227.FBpp0072781"/>
<dbReference type="PaxDb" id="7227-FBpp0072781"/>
<dbReference type="DNASU" id="38291"/>
<dbReference type="EnsemblMetazoa" id="FBtr0072903">
    <property type="protein sequence ID" value="FBpp0072781"/>
    <property type="gene ID" value="FBgn0000543"/>
</dbReference>
<dbReference type="GeneID" id="38291"/>
<dbReference type="KEGG" id="dme:Dmel_CG5714"/>
<dbReference type="UCSC" id="CG5714-RA">
    <property type="organism name" value="d. melanogaster"/>
</dbReference>
<dbReference type="AGR" id="FB:FBgn0000543"/>
<dbReference type="CTD" id="11319"/>
<dbReference type="FlyBase" id="FBgn0000543">
    <property type="gene designation" value="ecd"/>
</dbReference>
<dbReference type="VEuPathDB" id="VectorBase:FBgn0000543"/>
<dbReference type="eggNOG" id="KOG2406">
    <property type="taxonomic scope" value="Eukaryota"/>
</dbReference>
<dbReference type="GeneTree" id="ENSGT00390000015361"/>
<dbReference type="HOGENOM" id="CLU_006241_2_0_1"/>
<dbReference type="InParanoid" id="Q9W032"/>
<dbReference type="OMA" id="TKDYIWQ"/>
<dbReference type="OrthoDB" id="27237at2759"/>
<dbReference type="PhylomeDB" id="Q9W032"/>
<dbReference type="BioGRID-ORCS" id="38291">
    <property type="hits" value="0 hits in 1 CRISPR screen"/>
</dbReference>
<dbReference type="GenomeRNAi" id="38291"/>
<dbReference type="PRO" id="PR:Q9W032"/>
<dbReference type="Proteomes" id="UP000000803">
    <property type="component" value="Chromosome 3L"/>
</dbReference>
<dbReference type="Bgee" id="FBgn0000543">
    <property type="expression patterns" value="Expressed in T neuron T4d (Drosophila) in embryonic/larval optic lobe (Drosophila) and 51 other cell types or tissues"/>
</dbReference>
<dbReference type="GO" id="GO:0005737">
    <property type="term" value="C:cytoplasm"/>
    <property type="evidence" value="ECO:0000314"/>
    <property type="project" value="FlyBase"/>
</dbReference>
<dbReference type="GO" id="GO:0005634">
    <property type="term" value="C:nucleus"/>
    <property type="evidence" value="ECO:0000318"/>
    <property type="project" value="GO_Central"/>
</dbReference>
<dbReference type="GO" id="GO:0070990">
    <property type="term" value="F:snRNP binding"/>
    <property type="evidence" value="ECO:0000353"/>
    <property type="project" value="FlyBase"/>
</dbReference>
<dbReference type="GO" id="GO:0008362">
    <property type="term" value="P:chitin-based embryonic cuticle biosynthetic process"/>
    <property type="evidence" value="ECO:0000315"/>
    <property type="project" value="FlyBase"/>
</dbReference>
<dbReference type="GO" id="GO:0006697">
    <property type="term" value="P:ecdysone biosynthetic process"/>
    <property type="evidence" value="ECO:0000304"/>
    <property type="project" value="FlyBase"/>
</dbReference>
<dbReference type="GO" id="GO:0007281">
    <property type="term" value="P:germ cell development"/>
    <property type="evidence" value="ECO:0000315"/>
    <property type="project" value="FlyBase"/>
</dbReference>
<dbReference type="GO" id="GO:0007390">
    <property type="term" value="P:germ-band shortening"/>
    <property type="evidence" value="ECO:0000315"/>
    <property type="project" value="FlyBase"/>
</dbReference>
<dbReference type="GO" id="GO:0007030">
    <property type="term" value="P:Golgi organization"/>
    <property type="evidence" value="ECO:0000315"/>
    <property type="project" value="FlyBase"/>
</dbReference>
<dbReference type="GO" id="GO:0008258">
    <property type="term" value="P:head involution"/>
    <property type="evidence" value="ECO:0000315"/>
    <property type="project" value="FlyBase"/>
</dbReference>
<dbReference type="GO" id="GO:0002168">
    <property type="term" value="P:instar larval development"/>
    <property type="evidence" value="ECO:0000315"/>
    <property type="project" value="FlyBase"/>
</dbReference>
<dbReference type="GO" id="GO:0002165">
    <property type="term" value="P:instar larval or pupal development"/>
    <property type="evidence" value="ECO:0000304"/>
    <property type="project" value="FlyBase"/>
</dbReference>
<dbReference type="GO" id="GO:0048542">
    <property type="term" value="P:lymph gland development"/>
    <property type="evidence" value="ECO:0000315"/>
    <property type="project" value="FlyBase"/>
</dbReference>
<dbReference type="GO" id="GO:0007443">
    <property type="term" value="P:Malpighian tubule morphogenesis"/>
    <property type="evidence" value="ECO:0000315"/>
    <property type="project" value="FlyBase"/>
</dbReference>
<dbReference type="GO" id="GO:0007591">
    <property type="term" value="P:molting cycle, chitin-based cuticle"/>
    <property type="evidence" value="ECO:0000315"/>
    <property type="project" value="FlyBase"/>
</dbReference>
<dbReference type="GO" id="GO:0000398">
    <property type="term" value="P:mRNA splicing, via spliceosome"/>
    <property type="evidence" value="ECO:0000315"/>
    <property type="project" value="FlyBase"/>
</dbReference>
<dbReference type="GO" id="GO:0016319">
    <property type="term" value="P:mushroom body development"/>
    <property type="evidence" value="ECO:0000315"/>
    <property type="project" value="FlyBase"/>
</dbReference>
<dbReference type="GO" id="GO:0048477">
    <property type="term" value="P:oogenesis"/>
    <property type="evidence" value="ECO:0000315"/>
    <property type="project" value="FlyBase"/>
</dbReference>
<dbReference type="GO" id="GO:0007458">
    <property type="term" value="P:progression of morphogenetic furrow involved in compound eye morphogenesis"/>
    <property type="evidence" value="ECO:0000315"/>
    <property type="project" value="FlyBase"/>
</dbReference>
<dbReference type="GO" id="GO:0009608">
    <property type="term" value="P:response to symbiont"/>
    <property type="evidence" value="ECO:0000315"/>
    <property type="project" value="FlyBase"/>
</dbReference>
<dbReference type="InterPro" id="IPR010770">
    <property type="entry name" value="Ecd"/>
</dbReference>
<dbReference type="PANTHER" id="PTHR13060:SF0">
    <property type="entry name" value="PROTEIN ECDYSONELESS HOMOLOG"/>
    <property type="match status" value="1"/>
</dbReference>
<dbReference type="PANTHER" id="PTHR13060">
    <property type="entry name" value="SGT1 PROTEIN HSGT1 SUPPRESSOR OF GCR2"/>
    <property type="match status" value="1"/>
</dbReference>
<dbReference type="Pfam" id="PF07093">
    <property type="entry name" value="SGT1"/>
    <property type="match status" value="1"/>
</dbReference>
<gene>
    <name evidence="5" type="primary">ecd</name>
    <name type="ORF">CG5714</name>
</gene>
<keyword id="KW-0963">Cytoplasm</keyword>
<keyword id="KW-0217">Developmental protein</keyword>
<keyword id="KW-0221">Differentiation</keyword>
<keyword id="KW-0896">Oogenesis</keyword>
<keyword id="KW-1185">Reference proteome</keyword>